<gene>
    <name type="primary">pseB</name>
    <name type="ordered locus">Cj1293</name>
</gene>
<evidence type="ECO:0000250" key="1"/>
<evidence type="ECO:0000269" key="2">
    <source>
    </source>
</evidence>
<evidence type="ECO:0000305" key="3"/>
<name>PSEB_CAMJE</name>
<sequence>MFNKKNILITGGTGSFGKTYTKVLLENYKPNKIIIYSRDELKQFEMASVFNAPCMRYFIGDVRDKERLSAAMRDVDFVIHAAAMKHVPIAEYNPMECIKTNIHGAQNVIDACFENGVKKCIALSTDKACNPVNLYGATKLASDKLFVAANNIAGNKQTRFGVTRYGNVVGSRGSVVPFFKKLISEGAKELPITDTRMTRFWISLEDGVKFVLSNFERMHGGEIFIPKIPSMKITDLAHALAPNLSHKIIGIRAGEKLHEIMISSDDSHLTYEFENYYAISPSIKFVDKDNDFSINALGEKGQKVKDGFSYSSDNNPLWASEKELLEIINHTEGF</sequence>
<accession>Q0P8W4</accession>
<comment type="function">
    <text evidence="2">Catalyzes the first step in the biosynthesis of pseudaminic acid, a sialic-acid-like sugar that is used to modify flagellin. Has both C6 dehydratase and C5 epimerase activities that result in the production of both UDP-2-acetamido-2,6-dideoxy-beta-L-arabino-4-hexulose and UDP-2-acetamido-2,6-dideoxy-alpha-D-xylo-4-hexulose.</text>
</comment>
<comment type="catalytic activity">
    <reaction evidence="2">
        <text>UDP-N-acetyl-alpha-D-glucosamine = UDP-2-acetamido-2,6-dideoxy-beta-L-arabino-hex-4-ulose + H2O</text>
        <dbReference type="Rhea" id="RHEA:26111"/>
        <dbReference type="ChEBI" id="CHEBI:15377"/>
        <dbReference type="ChEBI" id="CHEBI:57705"/>
        <dbReference type="ChEBI" id="CHEBI:60101"/>
        <dbReference type="EC" id="4.2.1.115"/>
    </reaction>
</comment>
<comment type="cofactor">
    <cofactor evidence="1">
        <name>NADP(+)</name>
        <dbReference type="ChEBI" id="CHEBI:58349"/>
    </cofactor>
</comment>
<comment type="subunit">
    <text evidence="1">Homohexamer.</text>
</comment>
<comment type="similarity">
    <text evidence="3">Belongs to the polysaccharide synthase family.</text>
</comment>
<dbReference type="EC" id="4.2.1.115"/>
<dbReference type="EMBL" id="AL111168">
    <property type="protein sequence ID" value="CAL35407.1"/>
    <property type="molecule type" value="Genomic_DNA"/>
</dbReference>
<dbReference type="PIR" id="B81272">
    <property type="entry name" value="B81272"/>
</dbReference>
<dbReference type="RefSeq" id="WP_002858028.1">
    <property type="nucleotide sequence ID" value="NZ_SZUC01000001.1"/>
</dbReference>
<dbReference type="RefSeq" id="YP_002344683.1">
    <property type="nucleotide sequence ID" value="NC_002163.1"/>
</dbReference>
<dbReference type="SMR" id="Q0P8W4"/>
<dbReference type="IntAct" id="Q0P8W4">
    <property type="interactions" value="7"/>
</dbReference>
<dbReference type="STRING" id="192222.Cj1293"/>
<dbReference type="PaxDb" id="192222-Cj1293"/>
<dbReference type="EnsemblBacteria" id="CAL35407">
    <property type="protein sequence ID" value="CAL35407"/>
    <property type="gene ID" value="Cj1293"/>
</dbReference>
<dbReference type="GeneID" id="905585"/>
<dbReference type="KEGG" id="cje:Cj1293"/>
<dbReference type="PATRIC" id="fig|192222.6.peg.1275"/>
<dbReference type="eggNOG" id="COG1086">
    <property type="taxonomic scope" value="Bacteria"/>
</dbReference>
<dbReference type="HOGENOM" id="CLU_013560_4_1_7"/>
<dbReference type="OrthoDB" id="9769113at2"/>
<dbReference type="Proteomes" id="UP000000799">
    <property type="component" value="Chromosome"/>
</dbReference>
<dbReference type="GO" id="GO:0016829">
    <property type="term" value="F:lyase activity"/>
    <property type="evidence" value="ECO:0007669"/>
    <property type="project" value="UniProtKB-KW"/>
</dbReference>
<dbReference type="GO" id="GO:0000166">
    <property type="term" value="F:nucleotide binding"/>
    <property type="evidence" value="ECO:0007669"/>
    <property type="project" value="UniProtKB-KW"/>
</dbReference>
<dbReference type="CDD" id="cd05237">
    <property type="entry name" value="UDP_invert_4-6DH_SDR_e"/>
    <property type="match status" value="1"/>
</dbReference>
<dbReference type="Gene3D" id="3.40.50.720">
    <property type="entry name" value="NAD(P)-binding Rossmann-like Domain"/>
    <property type="match status" value="1"/>
</dbReference>
<dbReference type="InterPro" id="IPR036291">
    <property type="entry name" value="NAD(P)-bd_dom_sf"/>
</dbReference>
<dbReference type="InterPro" id="IPR003869">
    <property type="entry name" value="Polysac_CapD-like"/>
</dbReference>
<dbReference type="InterPro" id="IPR051203">
    <property type="entry name" value="Polysaccharide_Synthase-Rel"/>
</dbReference>
<dbReference type="InterPro" id="IPR020025">
    <property type="entry name" value="PseB"/>
</dbReference>
<dbReference type="NCBIfam" id="TIGR03589">
    <property type="entry name" value="PseB"/>
    <property type="match status" value="1"/>
</dbReference>
<dbReference type="PANTHER" id="PTHR43318">
    <property type="entry name" value="UDP-N-ACETYLGLUCOSAMINE 4,6-DEHYDRATASE"/>
    <property type="match status" value="1"/>
</dbReference>
<dbReference type="PANTHER" id="PTHR43318:SF2">
    <property type="entry name" value="UDP-N-ACETYLGLUCOSAMINE 4,6-DEHYDRATASE (INVERTING)"/>
    <property type="match status" value="1"/>
</dbReference>
<dbReference type="Pfam" id="PF02719">
    <property type="entry name" value="Polysacc_synt_2"/>
    <property type="match status" value="1"/>
</dbReference>
<dbReference type="SUPFAM" id="SSF51735">
    <property type="entry name" value="NAD(P)-binding Rossmann-fold domains"/>
    <property type="match status" value="1"/>
</dbReference>
<reference key="1">
    <citation type="journal article" date="2000" name="Nature">
        <title>The genome sequence of the food-borne pathogen Campylobacter jejuni reveals hypervariable sequences.</title>
        <authorList>
            <person name="Parkhill J."/>
            <person name="Wren B.W."/>
            <person name="Mungall K.L."/>
            <person name="Ketley J.M."/>
            <person name="Churcher C.M."/>
            <person name="Basham D."/>
            <person name="Chillingworth T."/>
            <person name="Davies R.M."/>
            <person name="Feltwell T."/>
            <person name="Holroyd S."/>
            <person name="Jagels K."/>
            <person name="Karlyshev A.V."/>
            <person name="Moule S."/>
            <person name="Pallen M.J."/>
            <person name="Penn C.W."/>
            <person name="Quail M.A."/>
            <person name="Rajandream M.A."/>
            <person name="Rutherford K.M."/>
            <person name="van Vliet A.H.M."/>
            <person name="Whitehead S."/>
            <person name="Barrell B.G."/>
        </authorList>
    </citation>
    <scope>NUCLEOTIDE SEQUENCE [LARGE SCALE GENOMIC DNA]</scope>
    <source>
        <strain>ATCC 700819 / NCTC 11168</strain>
    </source>
</reference>
<reference key="2">
    <citation type="journal article" date="2006" name="J. Biol. Chem.">
        <title>Functional characterization of dehydratase/aminotransferase pairs from Helicobacter and Campylobacter: enzymes distinguishing the pseudaminic acid and bacillosamine biosynthetic pathways.</title>
        <authorList>
            <person name="Schoenhofen I.C."/>
            <person name="McNally D.J."/>
            <person name="Vinogradov E."/>
            <person name="Whitfield D."/>
            <person name="Young N.M."/>
            <person name="Dick S."/>
            <person name="Wakarchuk W.W."/>
            <person name="Brisson J.R."/>
            <person name="Logan S.M."/>
        </authorList>
    </citation>
    <scope>FUNCTION</scope>
    <scope>CATALYTIC ACTIVITY</scope>
    <source>
        <strain>ATCC 700819 / NCTC 11168</strain>
    </source>
</reference>
<feature type="chain" id="PRO_0000418955" description="UDP-N-acetylglucosamine 4,6-dehydratase (inverting)">
    <location>
        <begin position="1"/>
        <end position="334"/>
    </location>
</feature>
<feature type="active site" evidence="1">
    <location>
        <position position="127"/>
    </location>
</feature>
<feature type="binding site" evidence="1">
    <location>
        <begin position="13"/>
        <end position="16"/>
    </location>
    <ligand>
        <name>NADP(+)</name>
        <dbReference type="ChEBI" id="CHEBI:58349"/>
    </ligand>
</feature>
<feature type="binding site" evidence="1">
    <location>
        <begin position="37"/>
        <end position="42"/>
    </location>
    <ligand>
        <name>NADP(+)</name>
        <dbReference type="ChEBI" id="CHEBI:58349"/>
    </ligand>
</feature>
<feature type="binding site" evidence="1">
    <location>
        <begin position="61"/>
        <end position="62"/>
    </location>
    <ligand>
        <name>NADP(+)</name>
        <dbReference type="ChEBI" id="CHEBI:58349"/>
    </ligand>
</feature>
<feature type="binding site" evidence="1">
    <location>
        <position position="81"/>
    </location>
    <ligand>
        <name>NADP(+)</name>
        <dbReference type="ChEBI" id="CHEBI:58349"/>
    </ligand>
</feature>
<feature type="binding site" evidence="1">
    <location>
        <position position="85"/>
    </location>
    <ligand>
        <name>NADP(+)</name>
        <dbReference type="ChEBI" id="CHEBI:58349"/>
    </ligand>
</feature>
<feature type="binding site" evidence="1">
    <location>
        <position position="85"/>
    </location>
    <ligand>
        <name>substrate</name>
    </ligand>
</feature>
<feature type="binding site" evidence="1">
    <location>
        <begin position="123"/>
        <end position="124"/>
    </location>
    <ligand>
        <name>NADP(+)</name>
        <dbReference type="ChEBI" id="CHEBI:58349"/>
    </ligand>
</feature>
<feature type="binding site" evidence="1">
    <location>
        <position position="135"/>
    </location>
    <ligand>
        <name>NADP(+)</name>
        <dbReference type="ChEBI" id="CHEBI:58349"/>
    </ligand>
</feature>
<feature type="binding site" evidence="1">
    <location>
        <position position="139"/>
    </location>
    <ligand>
        <name>NADP(+)</name>
        <dbReference type="ChEBI" id="CHEBI:58349"/>
    </ligand>
</feature>
<feature type="binding site" evidence="1">
    <location>
        <position position="167"/>
    </location>
    <ligand>
        <name>substrate</name>
    </ligand>
</feature>
<feature type="binding site" evidence="1">
    <location>
        <begin position="168"/>
        <end position="172"/>
    </location>
    <ligand>
        <name>NADP(+)</name>
        <dbReference type="ChEBI" id="CHEBI:58349"/>
    </ligand>
</feature>
<feature type="binding site" evidence="1">
    <location>
        <position position="175"/>
    </location>
    <ligand>
        <name>substrate</name>
    </ligand>
</feature>
<feature type="binding site" evidence="1">
    <location>
        <position position="193"/>
    </location>
    <ligand>
        <name>substrate</name>
    </ligand>
</feature>
<feature type="binding site" evidence="1">
    <location>
        <position position="252"/>
    </location>
    <ligand>
        <name>substrate</name>
    </ligand>
</feature>
<feature type="binding site" evidence="1">
    <location>
        <position position="255"/>
    </location>
    <ligand>
        <name>substrate</name>
    </ligand>
</feature>
<keyword id="KW-0456">Lyase</keyword>
<keyword id="KW-0521">NADP</keyword>
<keyword id="KW-0547">Nucleotide-binding</keyword>
<keyword id="KW-1185">Reference proteome</keyword>
<protein>
    <recommendedName>
        <fullName>UDP-N-acetylglucosamine 4,6-dehydratase (inverting)</fullName>
        <ecNumber>4.2.1.115</ecNumber>
    </recommendedName>
    <alternativeName>
        <fullName>Pseudaminic acid biosynthesis protein B</fullName>
    </alternativeName>
    <alternativeName>
        <fullName>UDP-GlcNAc-inverting 4,6-dehydratase</fullName>
    </alternativeName>
</protein>
<organism>
    <name type="scientific">Campylobacter jejuni subsp. jejuni serotype O:2 (strain ATCC 700819 / NCTC 11168)</name>
    <dbReference type="NCBI Taxonomy" id="192222"/>
    <lineage>
        <taxon>Bacteria</taxon>
        <taxon>Pseudomonadati</taxon>
        <taxon>Campylobacterota</taxon>
        <taxon>Epsilonproteobacteria</taxon>
        <taxon>Campylobacterales</taxon>
        <taxon>Campylobacteraceae</taxon>
        <taxon>Campylobacter</taxon>
    </lineage>
</organism>
<proteinExistence type="evidence at protein level"/>